<dbReference type="EC" id="4.2.1.20" evidence="1"/>
<dbReference type="EMBL" id="CP001015">
    <property type="protein sequence ID" value="ACF55433.1"/>
    <property type="molecule type" value="Genomic_DNA"/>
</dbReference>
<dbReference type="SMR" id="B5E7M2"/>
<dbReference type="KEGG" id="spx:SPG_1707"/>
<dbReference type="HOGENOM" id="CLU_016734_0_0_9"/>
<dbReference type="UniPathway" id="UPA00035">
    <property type="reaction ID" value="UER00044"/>
</dbReference>
<dbReference type="GO" id="GO:0005829">
    <property type="term" value="C:cytosol"/>
    <property type="evidence" value="ECO:0007669"/>
    <property type="project" value="TreeGrafter"/>
</dbReference>
<dbReference type="GO" id="GO:0004834">
    <property type="term" value="F:tryptophan synthase activity"/>
    <property type="evidence" value="ECO:0007669"/>
    <property type="project" value="UniProtKB-UniRule"/>
</dbReference>
<dbReference type="CDD" id="cd04724">
    <property type="entry name" value="Tryptophan_synthase_alpha"/>
    <property type="match status" value="1"/>
</dbReference>
<dbReference type="Gene3D" id="3.20.20.70">
    <property type="entry name" value="Aldolase class I"/>
    <property type="match status" value="1"/>
</dbReference>
<dbReference type="HAMAP" id="MF_00131">
    <property type="entry name" value="Trp_synth_alpha"/>
    <property type="match status" value="1"/>
</dbReference>
<dbReference type="InterPro" id="IPR013785">
    <property type="entry name" value="Aldolase_TIM"/>
</dbReference>
<dbReference type="InterPro" id="IPR011060">
    <property type="entry name" value="RibuloseP-bd_barrel"/>
</dbReference>
<dbReference type="InterPro" id="IPR018204">
    <property type="entry name" value="Trp_synthase_alpha_AS"/>
</dbReference>
<dbReference type="InterPro" id="IPR002028">
    <property type="entry name" value="Trp_synthase_suA"/>
</dbReference>
<dbReference type="NCBIfam" id="TIGR00262">
    <property type="entry name" value="trpA"/>
    <property type="match status" value="1"/>
</dbReference>
<dbReference type="PANTHER" id="PTHR43406:SF1">
    <property type="entry name" value="TRYPTOPHAN SYNTHASE ALPHA CHAIN, CHLOROPLASTIC"/>
    <property type="match status" value="1"/>
</dbReference>
<dbReference type="PANTHER" id="PTHR43406">
    <property type="entry name" value="TRYPTOPHAN SYNTHASE, ALPHA CHAIN"/>
    <property type="match status" value="1"/>
</dbReference>
<dbReference type="Pfam" id="PF00290">
    <property type="entry name" value="Trp_syntA"/>
    <property type="match status" value="1"/>
</dbReference>
<dbReference type="SUPFAM" id="SSF51366">
    <property type="entry name" value="Ribulose-phoshate binding barrel"/>
    <property type="match status" value="1"/>
</dbReference>
<dbReference type="PROSITE" id="PS00167">
    <property type="entry name" value="TRP_SYNTHASE_ALPHA"/>
    <property type="match status" value="1"/>
</dbReference>
<name>TRPA_STRP4</name>
<organism>
    <name type="scientific">Streptococcus pneumoniae serotype 19F (strain G54)</name>
    <dbReference type="NCBI Taxonomy" id="512566"/>
    <lineage>
        <taxon>Bacteria</taxon>
        <taxon>Bacillati</taxon>
        <taxon>Bacillota</taxon>
        <taxon>Bacilli</taxon>
        <taxon>Lactobacillales</taxon>
        <taxon>Streptococcaceae</taxon>
        <taxon>Streptococcus</taxon>
    </lineage>
</organism>
<reference key="1">
    <citation type="journal article" date="2001" name="Microb. Drug Resist.">
        <title>Annotated draft genomic sequence from a Streptococcus pneumoniae type 19F clinical isolate.</title>
        <authorList>
            <person name="Dopazo J."/>
            <person name="Mendoza A."/>
            <person name="Herrero J."/>
            <person name="Caldara F."/>
            <person name="Humbert Y."/>
            <person name="Friedli L."/>
            <person name="Guerrier M."/>
            <person name="Grand-Schenk E."/>
            <person name="Gandin C."/>
            <person name="de Francesco M."/>
            <person name="Polissi A."/>
            <person name="Buell G."/>
            <person name="Feger G."/>
            <person name="Garcia E."/>
            <person name="Peitsch M."/>
            <person name="Garcia-Bustos J.F."/>
        </authorList>
    </citation>
    <scope>NUCLEOTIDE SEQUENCE [LARGE SCALE GENOMIC DNA]</scope>
    <source>
        <strain>G54</strain>
    </source>
</reference>
<reference key="2">
    <citation type="submission" date="2008-03" db="EMBL/GenBank/DDBJ databases">
        <title>Pneumococcal beta glucoside metabolism investigated by whole genome comparison.</title>
        <authorList>
            <person name="Mulas L."/>
            <person name="Trappetti C."/>
            <person name="Hakenbeck R."/>
            <person name="Iannelli F."/>
            <person name="Pozzi G."/>
            <person name="Davidsen T.M."/>
            <person name="Tettelin H."/>
            <person name="Oggioni M."/>
        </authorList>
    </citation>
    <scope>NUCLEOTIDE SEQUENCE [LARGE SCALE GENOMIC DNA]</scope>
    <source>
        <strain>G54</strain>
    </source>
</reference>
<keyword id="KW-0028">Amino-acid biosynthesis</keyword>
<keyword id="KW-0057">Aromatic amino acid biosynthesis</keyword>
<keyword id="KW-0456">Lyase</keyword>
<keyword id="KW-0822">Tryptophan biosynthesis</keyword>
<proteinExistence type="inferred from homology"/>
<protein>
    <recommendedName>
        <fullName evidence="1">Tryptophan synthase alpha chain</fullName>
        <ecNumber evidence="1">4.2.1.20</ecNumber>
    </recommendedName>
</protein>
<evidence type="ECO:0000255" key="1">
    <source>
        <dbReference type="HAMAP-Rule" id="MF_00131"/>
    </source>
</evidence>
<accession>B5E7M2</accession>
<gene>
    <name evidence="1" type="primary">trpA</name>
    <name type="ordered locus">SPG_1707</name>
</gene>
<comment type="function">
    <text evidence="1">The alpha subunit is responsible for the aldol cleavage of indoleglycerol phosphate to indole and glyceraldehyde 3-phosphate.</text>
</comment>
<comment type="catalytic activity">
    <reaction evidence="1">
        <text>(1S,2R)-1-C-(indol-3-yl)glycerol 3-phosphate + L-serine = D-glyceraldehyde 3-phosphate + L-tryptophan + H2O</text>
        <dbReference type="Rhea" id="RHEA:10532"/>
        <dbReference type="ChEBI" id="CHEBI:15377"/>
        <dbReference type="ChEBI" id="CHEBI:33384"/>
        <dbReference type="ChEBI" id="CHEBI:57912"/>
        <dbReference type="ChEBI" id="CHEBI:58866"/>
        <dbReference type="ChEBI" id="CHEBI:59776"/>
        <dbReference type="EC" id="4.2.1.20"/>
    </reaction>
</comment>
<comment type="pathway">
    <text evidence="1">Amino-acid biosynthesis; L-tryptophan biosynthesis; L-tryptophan from chorismate: step 5/5.</text>
</comment>
<comment type="subunit">
    <text evidence="1">Tetramer of two alpha and two beta chains.</text>
</comment>
<comment type="similarity">
    <text evidence="1">Belongs to the TrpA family.</text>
</comment>
<sequence>MPKTLTEKLNAIKATGKGIFVPYIMAGDHEKGLDGLAETIHFLEDLGVSAIEVGIPFSDPVADGPVIEEAGLRSLAHGTSTQALVETLKTIETEIPLVIMTYFNPLFQYGVENFVKDLADTAVKGLIIPDLPHEHANFVEPFLADTDIALIPLVSLTTGIERQKELIEGAEGFVYAVAINGVTGKSGNYRADLDKHLAQLHQVADIPVLTGFGVSSQADLERFNAVSDGVIVGSKIVKALHQGEPIQDFIRQAVAYQK</sequence>
<feature type="chain" id="PRO_1000095755" description="Tryptophan synthase alpha chain">
    <location>
        <begin position="1"/>
        <end position="258"/>
    </location>
</feature>
<feature type="active site" description="Proton acceptor" evidence="1">
    <location>
        <position position="52"/>
    </location>
</feature>
<feature type="active site" description="Proton acceptor" evidence="1">
    <location>
        <position position="63"/>
    </location>
</feature>